<reference key="1">
    <citation type="journal article" date="2009" name="PLoS Biol.">
        <title>Lineage-specific biology revealed by a finished genome assembly of the mouse.</title>
        <authorList>
            <person name="Church D.M."/>
            <person name="Goodstadt L."/>
            <person name="Hillier L.W."/>
            <person name="Zody M.C."/>
            <person name="Goldstein S."/>
            <person name="She X."/>
            <person name="Bult C.J."/>
            <person name="Agarwala R."/>
            <person name="Cherry J.L."/>
            <person name="DiCuccio M."/>
            <person name="Hlavina W."/>
            <person name="Kapustin Y."/>
            <person name="Meric P."/>
            <person name="Maglott D."/>
            <person name="Birtle Z."/>
            <person name="Marques A.C."/>
            <person name="Graves T."/>
            <person name="Zhou S."/>
            <person name="Teague B."/>
            <person name="Potamousis K."/>
            <person name="Churas C."/>
            <person name="Place M."/>
            <person name="Herschleb J."/>
            <person name="Runnheim R."/>
            <person name="Forrest D."/>
            <person name="Amos-Landgraf J."/>
            <person name="Schwartz D.C."/>
            <person name="Cheng Z."/>
            <person name="Lindblad-Toh K."/>
            <person name="Eichler E.E."/>
            <person name="Ponting C.P."/>
        </authorList>
    </citation>
    <scope>NUCLEOTIDE SEQUENCE [LARGE SCALE GENOMIC DNA]</scope>
    <source>
        <strain>C57BL/6J</strain>
    </source>
</reference>
<reference key="2">
    <citation type="submission" date="2005-07" db="EMBL/GenBank/DDBJ databases">
        <authorList>
            <person name="Mural R.J."/>
            <person name="Adams M.D."/>
            <person name="Myers E.W."/>
            <person name="Smith H.O."/>
            <person name="Venter J.C."/>
        </authorList>
    </citation>
    <scope>NUCLEOTIDE SEQUENCE [LARGE SCALE GENOMIC DNA]</scope>
</reference>
<reference key="3">
    <citation type="journal article" date="2004" name="Genome Res.">
        <title>The status, quality, and expansion of the NIH full-length cDNA project: the Mammalian Gene Collection (MGC).</title>
        <authorList>
            <consortium name="The MGC Project Team"/>
        </authorList>
    </citation>
    <scope>NUCLEOTIDE SEQUENCE [LARGE SCALE MRNA] (ISOFORMS 1 AND 2)</scope>
    <source>
        <strain>FVB/N</strain>
        <tissue>Liver</tissue>
    </source>
</reference>
<reference key="4">
    <citation type="journal article" date="2010" name="Cell">
        <title>A tissue-specific atlas of mouse protein phosphorylation and expression.</title>
        <authorList>
            <person name="Huttlin E.L."/>
            <person name="Jedrychowski M.P."/>
            <person name="Elias J.E."/>
            <person name="Goswami T."/>
            <person name="Rad R."/>
            <person name="Beausoleil S.A."/>
            <person name="Villen J."/>
            <person name="Haas W."/>
            <person name="Sowa M.E."/>
            <person name="Gygi S.P."/>
        </authorList>
    </citation>
    <scope>IDENTIFICATION BY MASS SPECTROMETRY [LARGE SCALE ANALYSIS]</scope>
    <source>
        <tissue>Liver</tissue>
    </source>
</reference>
<dbReference type="EC" id="3.1.1.1"/>
<dbReference type="EMBL" id="AC164311">
    <property type="status" value="NOT_ANNOTATED_CDS"/>
    <property type="molecule type" value="Genomic_DNA"/>
</dbReference>
<dbReference type="EMBL" id="CH466525">
    <property type="protein sequence ID" value="EDL11245.1"/>
    <property type="molecule type" value="Genomic_DNA"/>
</dbReference>
<dbReference type="EMBL" id="CH466525">
    <property type="protein sequence ID" value="EDL11246.1"/>
    <property type="molecule type" value="Genomic_DNA"/>
</dbReference>
<dbReference type="EMBL" id="BC010812">
    <property type="protein sequence ID" value="AAH10812.1"/>
    <property type="status" value="ALT_INIT"/>
    <property type="molecule type" value="mRNA"/>
</dbReference>
<dbReference type="EMBL" id="BC019147">
    <property type="protein sequence ID" value="AAH19147.1"/>
    <property type="status" value="ALT_INIT"/>
    <property type="molecule type" value="mRNA"/>
</dbReference>
<dbReference type="CCDS" id="CCDS22590.2">
    <molecule id="Q8VCU1-1"/>
</dbReference>
<dbReference type="CCDS" id="CCDS52653.1">
    <molecule id="Q8VCU1-2"/>
</dbReference>
<dbReference type="RefSeq" id="NP_001152887.1">
    <molecule id="Q8VCU1-2"/>
    <property type="nucleotide sequence ID" value="NM_001159415.1"/>
</dbReference>
<dbReference type="RefSeq" id="NP_653094.2">
    <molecule id="Q8VCU1-1"/>
    <property type="nucleotide sequence ID" value="NM_144511.2"/>
</dbReference>
<dbReference type="SMR" id="Q8VCU1"/>
<dbReference type="FunCoup" id="Q8VCU1">
    <property type="interactions" value="19"/>
</dbReference>
<dbReference type="STRING" id="10090.ENSMUSP00000090909"/>
<dbReference type="ESTHER" id="mouse-Ces3b">
    <property type="family name" value="Carb_B_Chordata"/>
</dbReference>
<dbReference type="MEROPS" id="S09.971"/>
<dbReference type="GlyCosmos" id="Q8VCU1">
    <property type="glycosylation" value="1 site, No reported glycans"/>
</dbReference>
<dbReference type="GlyGen" id="Q8VCU1">
    <property type="glycosylation" value="2 sites, 1 N-linked glycan (1 site), 1 O-linked glycan (1 site)"/>
</dbReference>
<dbReference type="iPTMnet" id="Q8VCU1"/>
<dbReference type="PhosphoSitePlus" id="Q8VCU1"/>
<dbReference type="SwissPalm" id="Q8VCU1"/>
<dbReference type="jPOST" id="Q8VCU1"/>
<dbReference type="PaxDb" id="10090-ENSMUSP00000090909"/>
<dbReference type="PeptideAtlas" id="Q8VCU1"/>
<dbReference type="ProteomicsDB" id="275893">
    <molecule id="Q8VCU1-1"/>
</dbReference>
<dbReference type="ProteomicsDB" id="275894">
    <molecule id="Q8VCU1-2"/>
</dbReference>
<dbReference type="DNASU" id="13909"/>
<dbReference type="Ensembl" id="ENSMUST00000074403.13">
    <molecule id="Q8VCU1-2"/>
    <property type="protein sequence ID" value="ENSMUSP00000074004.7"/>
    <property type="gene ID" value="ENSMUSG00000062181.15"/>
</dbReference>
<dbReference type="Ensembl" id="ENSMUST00000093221.13">
    <molecule id="Q8VCU1-1"/>
    <property type="protein sequence ID" value="ENSMUSP00000090909.7"/>
    <property type="gene ID" value="ENSMUSG00000062181.15"/>
</dbReference>
<dbReference type="GeneID" id="13909"/>
<dbReference type="KEGG" id="mmu:13909"/>
<dbReference type="UCSC" id="uc009nbn.2">
    <molecule id="Q8VCU1-1"/>
    <property type="organism name" value="mouse"/>
</dbReference>
<dbReference type="UCSC" id="uc012gjc.1">
    <molecule id="Q8VCU1-2"/>
    <property type="organism name" value="mouse"/>
</dbReference>
<dbReference type="AGR" id="MGI:3644960"/>
<dbReference type="CTD" id="13909"/>
<dbReference type="MGI" id="MGI:3644960">
    <property type="gene designation" value="Ces3b"/>
</dbReference>
<dbReference type="VEuPathDB" id="HostDB:ENSMUSG00000062181"/>
<dbReference type="eggNOG" id="KOG1516">
    <property type="taxonomic scope" value="Eukaryota"/>
</dbReference>
<dbReference type="GeneTree" id="ENSGT00940000155200"/>
<dbReference type="HOGENOM" id="CLU_006586_13_0_1"/>
<dbReference type="InParanoid" id="Q8VCU1"/>
<dbReference type="OMA" id="EANRDWY"/>
<dbReference type="OrthoDB" id="3200163at2759"/>
<dbReference type="PhylomeDB" id="Q8VCU1"/>
<dbReference type="TreeFam" id="TF315470"/>
<dbReference type="Reactome" id="R-MMU-211945">
    <property type="pathway name" value="Phase I - Functionalization of compounds"/>
</dbReference>
<dbReference type="Reactome" id="R-MMU-8964038">
    <property type="pathway name" value="LDL clearance"/>
</dbReference>
<dbReference type="BioGRID-ORCS" id="13909">
    <property type="hits" value="1 hit in 77 CRISPR screens"/>
</dbReference>
<dbReference type="ChiTaRS" id="Ces3b">
    <property type="organism name" value="mouse"/>
</dbReference>
<dbReference type="PRO" id="PR:Q8VCU1"/>
<dbReference type="Proteomes" id="UP000000589">
    <property type="component" value="Chromosome 8"/>
</dbReference>
<dbReference type="RNAct" id="Q8VCU1">
    <property type="molecule type" value="protein"/>
</dbReference>
<dbReference type="Bgee" id="ENSMUSG00000062181">
    <property type="expression patterns" value="Expressed in liver and 7 other cell types or tissues"/>
</dbReference>
<dbReference type="ExpressionAtlas" id="Q8VCU1">
    <property type="expression patterns" value="baseline and differential"/>
</dbReference>
<dbReference type="GO" id="GO:0005788">
    <property type="term" value="C:endoplasmic reticulum lumen"/>
    <property type="evidence" value="ECO:0007669"/>
    <property type="project" value="UniProtKB-SubCell"/>
</dbReference>
<dbReference type="GO" id="GO:0106435">
    <property type="term" value="F:carboxylesterase activity"/>
    <property type="evidence" value="ECO:0007669"/>
    <property type="project" value="UniProtKB-EC"/>
</dbReference>
<dbReference type="CDD" id="cd00312">
    <property type="entry name" value="Esterase_lipase"/>
    <property type="match status" value="1"/>
</dbReference>
<dbReference type="FunFam" id="3.40.50.1820:FF:000011">
    <property type="entry name" value="Carboxylic ester hydrolase"/>
    <property type="match status" value="1"/>
</dbReference>
<dbReference type="Gene3D" id="3.40.50.1820">
    <property type="entry name" value="alpha/beta hydrolase"/>
    <property type="match status" value="1"/>
</dbReference>
<dbReference type="InterPro" id="IPR029058">
    <property type="entry name" value="AB_hydrolase_fold"/>
</dbReference>
<dbReference type="InterPro" id="IPR002018">
    <property type="entry name" value="CarbesteraseB"/>
</dbReference>
<dbReference type="InterPro" id="IPR019826">
    <property type="entry name" value="Carboxylesterase_B_AS"/>
</dbReference>
<dbReference type="InterPro" id="IPR019819">
    <property type="entry name" value="Carboxylesterase_B_CS"/>
</dbReference>
<dbReference type="InterPro" id="IPR050309">
    <property type="entry name" value="Type-B_Carboxylest/Lipase"/>
</dbReference>
<dbReference type="PANTHER" id="PTHR11559">
    <property type="entry name" value="CARBOXYLESTERASE"/>
    <property type="match status" value="1"/>
</dbReference>
<dbReference type="Pfam" id="PF00135">
    <property type="entry name" value="COesterase"/>
    <property type="match status" value="1"/>
</dbReference>
<dbReference type="SUPFAM" id="SSF53474">
    <property type="entry name" value="alpha/beta-Hydrolases"/>
    <property type="match status" value="1"/>
</dbReference>
<dbReference type="PROSITE" id="PS00122">
    <property type="entry name" value="CARBOXYLESTERASE_B_1"/>
    <property type="match status" value="1"/>
</dbReference>
<dbReference type="PROSITE" id="PS00941">
    <property type="entry name" value="CARBOXYLESTERASE_B_2"/>
    <property type="match status" value="1"/>
</dbReference>
<feature type="signal peptide" evidence="2">
    <location>
        <begin position="1"/>
        <end position="31"/>
    </location>
</feature>
<feature type="chain" id="PRO_0000305195" description="Carboxylesterase 3B">
    <location>
        <begin position="32"/>
        <end position="571"/>
    </location>
</feature>
<feature type="short sequence motif" description="Prevents secretion from ER" evidence="2">
    <location>
        <begin position="568"/>
        <end position="571"/>
    </location>
</feature>
<feature type="active site" description="Acyl-ester intermediate" evidence="3">
    <location>
        <position position="232"/>
    </location>
</feature>
<feature type="active site" description="Charge relay system" evidence="1">
    <location>
        <position position="347"/>
    </location>
</feature>
<feature type="active site" description="Charge relay system" evidence="1">
    <location>
        <position position="460"/>
    </location>
</feature>
<feature type="glycosylation site" description="N-linked (GlcNAc...) asparagine" evidence="2">
    <location>
        <position position="311"/>
    </location>
</feature>
<feature type="disulfide bond" evidence="1">
    <location>
        <begin position="100"/>
        <end position="127"/>
    </location>
</feature>
<feature type="disulfide bond" evidence="1">
    <location>
        <begin position="284"/>
        <end position="295"/>
    </location>
</feature>
<feature type="splice variant" id="VSP_028269" description="In isoform 2." evidence="4">
    <location>
        <begin position="431"/>
        <end position="480"/>
    </location>
</feature>
<keyword id="KW-0025">Alternative splicing</keyword>
<keyword id="KW-1015">Disulfide bond</keyword>
<keyword id="KW-0256">Endoplasmic reticulum</keyword>
<keyword id="KW-0325">Glycoprotein</keyword>
<keyword id="KW-0378">Hydrolase</keyword>
<keyword id="KW-1185">Reference proteome</keyword>
<keyword id="KW-0719">Serine esterase</keyword>
<keyword id="KW-0732">Signal</keyword>
<name>EST3B_MOUSE</name>
<comment type="function">
    <text evidence="1">Involved in the detoxification of xenobiotics and in the activation of ester and amide prodrugs.</text>
</comment>
<comment type="catalytic activity">
    <reaction evidence="3">
        <text>a carboxylic ester + H2O = an alcohol + a carboxylate + H(+)</text>
        <dbReference type="Rhea" id="RHEA:21164"/>
        <dbReference type="ChEBI" id="CHEBI:15377"/>
        <dbReference type="ChEBI" id="CHEBI:15378"/>
        <dbReference type="ChEBI" id="CHEBI:29067"/>
        <dbReference type="ChEBI" id="CHEBI:30879"/>
        <dbReference type="ChEBI" id="CHEBI:33308"/>
        <dbReference type="EC" id="3.1.1.1"/>
    </reaction>
</comment>
<comment type="subcellular location">
    <subcellularLocation>
        <location evidence="1">Endoplasmic reticulum lumen</location>
    </subcellularLocation>
</comment>
<comment type="alternative products">
    <event type="alternative splicing"/>
    <isoform>
        <id>Q8VCU1-1</id>
        <name>1</name>
        <sequence type="displayed"/>
    </isoform>
    <isoform>
        <id>Q8VCU1-2</id>
        <name>2</name>
        <sequence type="described" ref="VSP_028269"/>
    </isoform>
</comment>
<comment type="similarity">
    <text evidence="5">Belongs to the type-B carboxylesterase/lipase family.</text>
</comment>
<comment type="sequence caution" evidence="5">
    <conflict type="erroneous initiation">
        <sequence resource="EMBL-CDS" id="AAH10812"/>
    </conflict>
    <text>Truncated N-terminus.</text>
</comment>
<comment type="sequence caution" evidence="5">
    <conflict type="erroneous initiation">
        <sequence resource="EMBL-CDS" id="AAH19147"/>
    </conflict>
    <text>Truncated N-terminus.</text>
</comment>
<proteinExistence type="evidence at protein level"/>
<organism>
    <name type="scientific">Mus musculus</name>
    <name type="common">Mouse</name>
    <dbReference type="NCBI Taxonomy" id="10090"/>
    <lineage>
        <taxon>Eukaryota</taxon>
        <taxon>Metazoa</taxon>
        <taxon>Chordata</taxon>
        <taxon>Craniata</taxon>
        <taxon>Vertebrata</taxon>
        <taxon>Euteleostomi</taxon>
        <taxon>Mammalia</taxon>
        <taxon>Eutheria</taxon>
        <taxon>Euarchontoglires</taxon>
        <taxon>Glires</taxon>
        <taxon>Rodentia</taxon>
        <taxon>Myomorpha</taxon>
        <taxon>Muroidea</taxon>
        <taxon>Muridae</taxon>
        <taxon>Murinae</taxon>
        <taxon>Mus</taxon>
        <taxon>Mus</taxon>
    </lineage>
</organism>
<accession>Q8VCU1</accession>
<accession>G5E8G7</accession>
<accession>G5E8K9</accession>
<accession>Q91XD5</accession>
<protein>
    <recommendedName>
        <fullName>Carboxylesterase 3B</fullName>
        <ecNumber>3.1.1.1</ecNumber>
    </recommendedName>
    <alternativeName>
        <fullName>Liver carboxylesterase 31-like</fullName>
    </alternativeName>
</protein>
<gene>
    <name type="primary">Ces3b</name>
    <name type="synonym">Gm4738</name>
</gene>
<evidence type="ECO:0000250" key="1"/>
<evidence type="ECO:0000255" key="2"/>
<evidence type="ECO:0000255" key="3">
    <source>
        <dbReference type="PROSITE-ProRule" id="PRU10039"/>
    </source>
</evidence>
<evidence type="ECO:0000303" key="4">
    <source>
    </source>
</evidence>
<evidence type="ECO:0000305" key="5"/>
<sequence length="571" mass="63353">MTNMRTMIPAGSSVLVWVTCLLLAFVTTVTGPKVIQPEVDTPLGRVRGRQVGVKDTDRMVNVFLGIPFAQAPVGPLRFSAPLPPQPWEGVRDASINPPMCLQDVEKMINSRFGLNEKIKIFPISEDCLTLNIYSPTEITAGDKRPVMVWIHGGSLLVGSSTSQDGSALAAYGDVVVVTVQYRLGIFGFLSTGDKHMPGNRGFLDVVAALRWVQGNIAPFGGDPNCVTIFGNSAGGMIVSSLFLSPISAGLFHRAISQSGIVTTIMMEDMKPWPEAQNFANSVACGSASPAELVQCLLQKEGKDLIKQKNVNISYIVNDSFFPQRPEKLLADQQFPTVPYLLGVTNHEFGWLLLKSLNILDKLEHLSREDLLEISRPFLAIMEVPPEIMPTVIDEYLDNGSDQSATRYAFQELLGDISFIIPTLNFSKYLRDAGCPVFLYEFQHTPSSFAKFKPAWVKADHASENSFVFGGPFLTDESSLLAFPEATEEEKQLSLTMMAQWSQFARTGNPNGKGLPPWPQLNQLEQYLEIGLESRTGVKLKKGRLQFWTETLPRKIQEWHREQRSRKVPEEL</sequence>